<organism>
    <name type="scientific">Pseudoalteromonas translucida (strain TAC 125)</name>
    <dbReference type="NCBI Taxonomy" id="326442"/>
    <lineage>
        <taxon>Bacteria</taxon>
        <taxon>Pseudomonadati</taxon>
        <taxon>Pseudomonadota</taxon>
        <taxon>Gammaproteobacteria</taxon>
        <taxon>Alteromonadales</taxon>
        <taxon>Pseudoalteromonadaceae</taxon>
        <taxon>Pseudoalteromonas</taxon>
    </lineage>
</organism>
<reference key="1">
    <citation type="journal article" date="2005" name="Genome Res.">
        <title>Coping with cold: the genome of the versatile marine Antarctica bacterium Pseudoalteromonas haloplanktis TAC125.</title>
        <authorList>
            <person name="Medigue C."/>
            <person name="Krin E."/>
            <person name="Pascal G."/>
            <person name="Barbe V."/>
            <person name="Bernsel A."/>
            <person name="Bertin P.N."/>
            <person name="Cheung F."/>
            <person name="Cruveiller S."/>
            <person name="D'Amico S."/>
            <person name="Duilio A."/>
            <person name="Fang G."/>
            <person name="Feller G."/>
            <person name="Ho C."/>
            <person name="Mangenot S."/>
            <person name="Marino G."/>
            <person name="Nilsson J."/>
            <person name="Parrilli E."/>
            <person name="Rocha E.P.C."/>
            <person name="Rouy Z."/>
            <person name="Sekowska A."/>
            <person name="Tutino M.L."/>
            <person name="Vallenet D."/>
            <person name="von Heijne G."/>
            <person name="Danchin A."/>
        </authorList>
    </citation>
    <scope>NUCLEOTIDE SEQUENCE [LARGE SCALE GENOMIC DNA]</scope>
    <source>
        <strain>TAC 125</strain>
    </source>
</reference>
<comment type="function">
    <text evidence="1">This protein is one of the two subunits of integration host factor, a specific DNA-binding protein that functions in genetic recombination as well as in transcriptional and translational control.</text>
</comment>
<comment type="subunit">
    <text evidence="1">Heterodimer of an alpha and a beta chain.</text>
</comment>
<comment type="similarity">
    <text evidence="1">Belongs to the bacterial histone-like protein family.</text>
</comment>
<keyword id="KW-0233">DNA recombination</keyword>
<keyword id="KW-0238">DNA-binding</keyword>
<keyword id="KW-1185">Reference proteome</keyword>
<keyword id="KW-0804">Transcription</keyword>
<keyword id="KW-0805">Transcription regulation</keyword>
<keyword id="KW-0810">Translation regulation</keyword>
<protein>
    <recommendedName>
        <fullName evidence="1">Integration host factor subunit alpha</fullName>
        <shortName evidence="1">IHF-alpha</shortName>
    </recommendedName>
</protein>
<gene>
    <name evidence="1" type="primary">ihfA</name>
    <name evidence="1" type="synonym">himA</name>
    <name type="ordered locus">PSHAa1902</name>
</gene>
<accession>Q3IIL3</accession>
<feature type="chain" id="PRO_0000277755" description="Integration host factor subunit alpha">
    <location>
        <begin position="1"/>
        <end position="99"/>
    </location>
</feature>
<sequence>MALTKADIAEHLFEKLGINKKDAKDLVEAFFEEIRSALEKGEQIKLSGFGNFDLRDKKERPGRNPKTGEDIPISARRVVTFRPGQKLKTRVEVGTSKAK</sequence>
<name>IHFA_PSET1</name>
<evidence type="ECO:0000255" key="1">
    <source>
        <dbReference type="HAMAP-Rule" id="MF_00380"/>
    </source>
</evidence>
<proteinExistence type="inferred from homology"/>
<dbReference type="EMBL" id="CR954246">
    <property type="protein sequence ID" value="CAI86972.1"/>
    <property type="molecule type" value="Genomic_DNA"/>
</dbReference>
<dbReference type="SMR" id="Q3IIL3"/>
<dbReference type="STRING" id="326442.PSHAa1902"/>
<dbReference type="KEGG" id="pha:PSHAa1902"/>
<dbReference type="eggNOG" id="COG0776">
    <property type="taxonomic scope" value="Bacteria"/>
</dbReference>
<dbReference type="HOGENOM" id="CLU_105066_1_3_6"/>
<dbReference type="BioCyc" id="PHAL326442:PSHA_RS09370-MONOMER"/>
<dbReference type="Proteomes" id="UP000006843">
    <property type="component" value="Chromosome I"/>
</dbReference>
<dbReference type="GO" id="GO:0005829">
    <property type="term" value="C:cytosol"/>
    <property type="evidence" value="ECO:0007669"/>
    <property type="project" value="TreeGrafter"/>
</dbReference>
<dbReference type="GO" id="GO:0003677">
    <property type="term" value="F:DNA binding"/>
    <property type="evidence" value="ECO:0007669"/>
    <property type="project" value="UniProtKB-UniRule"/>
</dbReference>
<dbReference type="GO" id="GO:0030527">
    <property type="term" value="F:structural constituent of chromatin"/>
    <property type="evidence" value="ECO:0007669"/>
    <property type="project" value="InterPro"/>
</dbReference>
<dbReference type="GO" id="GO:0006310">
    <property type="term" value="P:DNA recombination"/>
    <property type="evidence" value="ECO:0007669"/>
    <property type="project" value="UniProtKB-UniRule"/>
</dbReference>
<dbReference type="GO" id="GO:0009893">
    <property type="term" value="P:positive regulation of metabolic process"/>
    <property type="evidence" value="ECO:0007669"/>
    <property type="project" value="UniProtKB-ARBA"/>
</dbReference>
<dbReference type="GO" id="GO:0006355">
    <property type="term" value="P:regulation of DNA-templated transcription"/>
    <property type="evidence" value="ECO:0007669"/>
    <property type="project" value="UniProtKB-UniRule"/>
</dbReference>
<dbReference type="GO" id="GO:0006417">
    <property type="term" value="P:regulation of translation"/>
    <property type="evidence" value="ECO:0007669"/>
    <property type="project" value="UniProtKB-UniRule"/>
</dbReference>
<dbReference type="CDD" id="cd13835">
    <property type="entry name" value="IHF_A"/>
    <property type="match status" value="1"/>
</dbReference>
<dbReference type="FunFam" id="4.10.520.10:FF:000002">
    <property type="entry name" value="Integration host factor subunit alpha"/>
    <property type="match status" value="1"/>
</dbReference>
<dbReference type="Gene3D" id="4.10.520.10">
    <property type="entry name" value="IHF-like DNA-binding proteins"/>
    <property type="match status" value="1"/>
</dbReference>
<dbReference type="HAMAP" id="MF_00380">
    <property type="entry name" value="IHF_alpha"/>
    <property type="match status" value="1"/>
</dbReference>
<dbReference type="InterPro" id="IPR000119">
    <property type="entry name" value="Hist_DNA-bd"/>
</dbReference>
<dbReference type="InterPro" id="IPR020816">
    <property type="entry name" value="Histone-like_DNA-bd_CS"/>
</dbReference>
<dbReference type="InterPro" id="IPR010992">
    <property type="entry name" value="IHF-like_DNA-bd_dom_sf"/>
</dbReference>
<dbReference type="InterPro" id="IPR005684">
    <property type="entry name" value="IHF_alpha"/>
</dbReference>
<dbReference type="NCBIfam" id="TIGR00987">
    <property type="entry name" value="himA"/>
    <property type="match status" value="1"/>
</dbReference>
<dbReference type="NCBIfam" id="NF001401">
    <property type="entry name" value="PRK00285.1"/>
    <property type="match status" value="1"/>
</dbReference>
<dbReference type="PANTHER" id="PTHR33175">
    <property type="entry name" value="DNA-BINDING PROTEIN HU"/>
    <property type="match status" value="1"/>
</dbReference>
<dbReference type="PANTHER" id="PTHR33175:SF2">
    <property type="entry name" value="INTEGRATION HOST FACTOR SUBUNIT ALPHA"/>
    <property type="match status" value="1"/>
</dbReference>
<dbReference type="Pfam" id="PF00216">
    <property type="entry name" value="Bac_DNA_binding"/>
    <property type="match status" value="1"/>
</dbReference>
<dbReference type="PRINTS" id="PR01727">
    <property type="entry name" value="DNABINDINGHU"/>
</dbReference>
<dbReference type="SMART" id="SM00411">
    <property type="entry name" value="BHL"/>
    <property type="match status" value="1"/>
</dbReference>
<dbReference type="SUPFAM" id="SSF47729">
    <property type="entry name" value="IHF-like DNA-binding proteins"/>
    <property type="match status" value="1"/>
</dbReference>
<dbReference type="PROSITE" id="PS00045">
    <property type="entry name" value="HISTONE_LIKE"/>
    <property type="match status" value="1"/>
</dbReference>